<feature type="chain" id="PRO_1000202969" description="Deoxyribose-phosphate aldolase">
    <location>
        <begin position="1"/>
        <end position="222"/>
    </location>
</feature>
<feature type="active site" description="Proton donor/acceptor" evidence="1">
    <location>
        <position position="90"/>
    </location>
</feature>
<feature type="active site" description="Schiff-base intermediate with acetaldehyde" evidence="1">
    <location>
        <position position="152"/>
    </location>
</feature>
<feature type="active site" description="Proton donor/acceptor" evidence="1">
    <location>
        <position position="181"/>
    </location>
</feature>
<keyword id="KW-0963">Cytoplasm</keyword>
<keyword id="KW-0456">Lyase</keyword>
<keyword id="KW-0704">Schiff base</keyword>
<sequence>MTDYARYIDHTLLAANATEQQIIALCDEAVAHRFYAVCVNSGYVPLVAEKLKGTDVQVCSVIGFPLGAGLTASKAFEAKAAIDAGAQEIDMVINVGWLKSGKIAAVQADIQAVREVCAAIPLKVILETCLLDDEQIVLVCEMCRQLDVAFVKTSTGFSTGGAREEHVRLMRNTVGSEMGVKASGAVRDRQTAQRMIEAGATRIGTSSGVAIVSGEAAAAGNY</sequence>
<gene>
    <name evidence="1" type="primary">deoC</name>
    <name type="ordered locus">PC1_1685</name>
</gene>
<reference key="1">
    <citation type="submission" date="2009-07" db="EMBL/GenBank/DDBJ databases">
        <title>Complete sequence of Pectobacterium carotovorum subsp. carotovorum PC1.</title>
        <authorList>
            <consortium name="US DOE Joint Genome Institute"/>
            <person name="Lucas S."/>
            <person name="Copeland A."/>
            <person name="Lapidus A."/>
            <person name="Glavina del Rio T."/>
            <person name="Tice H."/>
            <person name="Bruce D."/>
            <person name="Goodwin L."/>
            <person name="Pitluck S."/>
            <person name="Munk A.C."/>
            <person name="Brettin T."/>
            <person name="Detter J.C."/>
            <person name="Han C."/>
            <person name="Tapia R."/>
            <person name="Larimer F."/>
            <person name="Land M."/>
            <person name="Hauser L."/>
            <person name="Kyrpides N."/>
            <person name="Mikhailova N."/>
            <person name="Balakrishnan V."/>
            <person name="Glasner J."/>
            <person name="Perna N.T."/>
        </authorList>
    </citation>
    <scope>NUCLEOTIDE SEQUENCE [LARGE SCALE GENOMIC DNA]</scope>
    <source>
        <strain>PC1</strain>
    </source>
</reference>
<comment type="function">
    <text evidence="1">Catalyzes a reversible aldol reaction between acetaldehyde and D-glyceraldehyde 3-phosphate to generate 2-deoxy-D-ribose 5-phosphate.</text>
</comment>
<comment type="catalytic activity">
    <reaction evidence="1">
        <text>2-deoxy-D-ribose 5-phosphate = D-glyceraldehyde 3-phosphate + acetaldehyde</text>
        <dbReference type="Rhea" id="RHEA:12821"/>
        <dbReference type="ChEBI" id="CHEBI:15343"/>
        <dbReference type="ChEBI" id="CHEBI:59776"/>
        <dbReference type="ChEBI" id="CHEBI:62877"/>
        <dbReference type="EC" id="4.1.2.4"/>
    </reaction>
</comment>
<comment type="pathway">
    <text evidence="1">Carbohydrate degradation; 2-deoxy-D-ribose 1-phosphate degradation; D-glyceraldehyde 3-phosphate and acetaldehyde from 2-deoxy-alpha-D-ribose 1-phosphate: step 2/2.</text>
</comment>
<comment type="subcellular location">
    <subcellularLocation>
        <location evidence="1">Cytoplasm</location>
    </subcellularLocation>
</comment>
<comment type="similarity">
    <text evidence="1">Belongs to the DeoC/FbaB aldolase family. DeoC type 1 subfamily.</text>
</comment>
<accession>C6DEP1</accession>
<protein>
    <recommendedName>
        <fullName evidence="1">Deoxyribose-phosphate aldolase</fullName>
        <shortName evidence="1">DERA</shortName>
        <ecNumber evidence="1">4.1.2.4</ecNumber>
    </recommendedName>
    <alternativeName>
        <fullName evidence="1">2-deoxy-D-ribose 5-phosphate aldolase</fullName>
    </alternativeName>
    <alternativeName>
        <fullName evidence="1">Phosphodeoxyriboaldolase</fullName>
        <shortName evidence="1">Deoxyriboaldolase</shortName>
    </alternativeName>
</protein>
<name>DEOC_PECCP</name>
<organism>
    <name type="scientific">Pectobacterium carotovorum subsp. carotovorum (strain PC1)</name>
    <dbReference type="NCBI Taxonomy" id="561230"/>
    <lineage>
        <taxon>Bacteria</taxon>
        <taxon>Pseudomonadati</taxon>
        <taxon>Pseudomonadota</taxon>
        <taxon>Gammaproteobacteria</taxon>
        <taxon>Enterobacterales</taxon>
        <taxon>Pectobacteriaceae</taxon>
        <taxon>Pectobacterium</taxon>
    </lineage>
</organism>
<dbReference type="EC" id="4.1.2.4" evidence="1"/>
<dbReference type="EMBL" id="CP001657">
    <property type="protein sequence ID" value="ACT12726.1"/>
    <property type="molecule type" value="Genomic_DNA"/>
</dbReference>
<dbReference type="RefSeq" id="WP_015839944.1">
    <property type="nucleotide sequence ID" value="NC_012917.1"/>
</dbReference>
<dbReference type="SMR" id="C6DEP1"/>
<dbReference type="STRING" id="561230.PC1_1685"/>
<dbReference type="KEGG" id="pct:PC1_1685"/>
<dbReference type="eggNOG" id="COG0274">
    <property type="taxonomic scope" value="Bacteria"/>
</dbReference>
<dbReference type="HOGENOM" id="CLU_053595_0_1_6"/>
<dbReference type="OrthoDB" id="6579831at2"/>
<dbReference type="UniPathway" id="UPA00002">
    <property type="reaction ID" value="UER00468"/>
</dbReference>
<dbReference type="Proteomes" id="UP000002736">
    <property type="component" value="Chromosome"/>
</dbReference>
<dbReference type="GO" id="GO:0005737">
    <property type="term" value="C:cytoplasm"/>
    <property type="evidence" value="ECO:0007669"/>
    <property type="project" value="UniProtKB-SubCell"/>
</dbReference>
<dbReference type="GO" id="GO:0004139">
    <property type="term" value="F:deoxyribose-phosphate aldolase activity"/>
    <property type="evidence" value="ECO:0007669"/>
    <property type="project" value="UniProtKB-UniRule"/>
</dbReference>
<dbReference type="GO" id="GO:0006018">
    <property type="term" value="P:2-deoxyribose 1-phosphate catabolic process"/>
    <property type="evidence" value="ECO:0007669"/>
    <property type="project" value="UniProtKB-UniRule"/>
</dbReference>
<dbReference type="GO" id="GO:0016052">
    <property type="term" value="P:carbohydrate catabolic process"/>
    <property type="evidence" value="ECO:0007669"/>
    <property type="project" value="TreeGrafter"/>
</dbReference>
<dbReference type="GO" id="GO:0009264">
    <property type="term" value="P:deoxyribonucleotide catabolic process"/>
    <property type="evidence" value="ECO:0007669"/>
    <property type="project" value="InterPro"/>
</dbReference>
<dbReference type="CDD" id="cd00959">
    <property type="entry name" value="DeoC"/>
    <property type="match status" value="1"/>
</dbReference>
<dbReference type="FunFam" id="3.20.20.70:FF:000044">
    <property type="entry name" value="Deoxyribose-phosphate aldolase"/>
    <property type="match status" value="1"/>
</dbReference>
<dbReference type="Gene3D" id="3.20.20.70">
    <property type="entry name" value="Aldolase class I"/>
    <property type="match status" value="1"/>
</dbReference>
<dbReference type="HAMAP" id="MF_00114">
    <property type="entry name" value="DeoC_type1"/>
    <property type="match status" value="1"/>
</dbReference>
<dbReference type="InterPro" id="IPR013785">
    <property type="entry name" value="Aldolase_TIM"/>
</dbReference>
<dbReference type="InterPro" id="IPR011343">
    <property type="entry name" value="DeoC"/>
</dbReference>
<dbReference type="InterPro" id="IPR002915">
    <property type="entry name" value="DeoC/FbaB/LacD_aldolase"/>
</dbReference>
<dbReference type="InterPro" id="IPR028581">
    <property type="entry name" value="DeoC_typeI"/>
</dbReference>
<dbReference type="NCBIfam" id="TIGR00126">
    <property type="entry name" value="deoC"/>
    <property type="match status" value="1"/>
</dbReference>
<dbReference type="PANTHER" id="PTHR10889">
    <property type="entry name" value="DEOXYRIBOSE-PHOSPHATE ALDOLASE"/>
    <property type="match status" value="1"/>
</dbReference>
<dbReference type="PANTHER" id="PTHR10889:SF1">
    <property type="entry name" value="DEOXYRIBOSE-PHOSPHATE ALDOLASE"/>
    <property type="match status" value="1"/>
</dbReference>
<dbReference type="Pfam" id="PF01791">
    <property type="entry name" value="DeoC"/>
    <property type="match status" value="1"/>
</dbReference>
<dbReference type="PIRSF" id="PIRSF001357">
    <property type="entry name" value="DeoC"/>
    <property type="match status" value="1"/>
</dbReference>
<dbReference type="SMART" id="SM01133">
    <property type="entry name" value="DeoC"/>
    <property type="match status" value="1"/>
</dbReference>
<dbReference type="SUPFAM" id="SSF51569">
    <property type="entry name" value="Aldolase"/>
    <property type="match status" value="1"/>
</dbReference>
<proteinExistence type="inferred from homology"/>
<evidence type="ECO:0000255" key="1">
    <source>
        <dbReference type="HAMAP-Rule" id="MF_00114"/>
    </source>
</evidence>